<organism>
    <name type="scientific">Desulforudis audaxviator (strain MP104C)</name>
    <dbReference type="NCBI Taxonomy" id="477974"/>
    <lineage>
        <taxon>Bacteria</taxon>
        <taxon>Bacillati</taxon>
        <taxon>Bacillota</taxon>
        <taxon>Clostridia</taxon>
        <taxon>Thermoanaerobacterales</taxon>
        <taxon>Candidatus Desulforudaceae</taxon>
        <taxon>Candidatus Desulforudis</taxon>
    </lineage>
</organism>
<keyword id="KW-0028">Amino-acid biosynthesis</keyword>
<keyword id="KW-0963">Cytoplasm</keyword>
<keyword id="KW-0220">Diaminopimelate biosynthesis</keyword>
<keyword id="KW-0456">Lyase</keyword>
<keyword id="KW-0457">Lysine biosynthesis</keyword>
<keyword id="KW-1185">Reference proteome</keyword>
<keyword id="KW-0704">Schiff base</keyword>
<accession>B1I383</accession>
<name>DAPA_DESAP</name>
<protein>
    <recommendedName>
        <fullName evidence="1">4-hydroxy-tetrahydrodipicolinate synthase</fullName>
        <shortName evidence="1">HTPA synthase</shortName>
        <ecNumber evidence="1">4.3.3.7</ecNumber>
    </recommendedName>
</protein>
<sequence>MTVDFGRVLTAMVSPFDKNMELNLPMARKLARHLVDSGSDGLVVCGTTGESPTLSKEEKLELFRTVVDEVGGRAVVVAGTGSYSTKDSIALTQAAEKLGVDAVMLVCPYYNKPSQDGLYQHFRAVAESTNLPVMIYNIPGRTSINLLPQTCARLAEIGNIVAIKEASGNMDQATELRRLLPDHFHIYSGDDSMTLPLLAVGGKGVVSVAAHLVGGKIQEMINAFTSGNITLAAKLHSSLFPLIKGLFMTTNPVPVKAALGMLGLNVGPPRLPLVEATEQEKEKLRVLLREAQLL</sequence>
<reference key="1">
    <citation type="submission" date="2007-10" db="EMBL/GenBank/DDBJ databases">
        <title>Complete sequence of chromosome of Desulforudis audaxviator MP104C.</title>
        <authorList>
            <person name="Copeland A."/>
            <person name="Lucas S."/>
            <person name="Lapidus A."/>
            <person name="Barry K."/>
            <person name="Glavina del Rio T."/>
            <person name="Dalin E."/>
            <person name="Tice H."/>
            <person name="Bruce D."/>
            <person name="Pitluck S."/>
            <person name="Lowry S.R."/>
            <person name="Larimer F."/>
            <person name="Land M.L."/>
            <person name="Hauser L."/>
            <person name="Kyrpides N."/>
            <person name="Ivanova N.N."/>
            <person name="Richardson P."/>
        </authorList>
    </citation>
    <scope>NUCLEOTIDE SEQUENCE [LARGE SCALE GENOMIC DNA]</scope>
    <source>
        <strain>MP104C</strain>
    </source>
</reference>
<dbReference type="EC" id="4.3.3.7" evidence="1"/>
<dbReference type="EMBL" id="CP000860">
    <property type="protein sequence ID" value="ACA59459.1"/>
    <property type="molecule type" value="Genomic_DNA"/>
</dbReference>
<dbReference type="RefSeq" id="WP_012302045.1">
    <property type="nucleotide sequence ID" value="NC_010424.1"/>
</dbReference>
<dbReference type="SMR" id="B1I383"/>
<dbReference type="STRING" id="477974.Daud_0946"/>
<dbReference type="KEGG" id="dau:Daud_0946"/>
<dbReference type="eggNOG" id="COG0329">
    <property type="taxonomic scope" value="Bacteria"/>
</dbReference>
<dbReference type="HOGENOM" id="CLU_049343_7_1_9"/>
<dbReference type="OrthoDB" id="9782828at2"/>
<dbReference type="UniPathway" id="UPA00034">
    <property type="reaction ID" value="UER00017"/>
</dbReference>
<dbReference type="Proteomes" id="UP000008544">
    <property type="component" value="Chromosome"/>
</dbReference>
<dbReference type="GO" id="GO:0005829">
    <property type="term" value="C:cytosol"/>
    <property type="evidence" value="ECO:0007669"/>
    <property type="project" value="TreeGrafter"/>
</dbReference>
<dbReference type="GO" id="GO:0008840">
    <property type="term" value="F:4-hydroxy-tetrahydrodipicolinate synthase activity"/>
    <property type="evidence" value="ECO:0007669"/>
    <property type="project" value="UniProtKB-UniRule"/>
</dbReference>
<dbReference type="GO" id="GO:0019877">
    <property type="term" value="P:diaminopimelate biosynthetic process"/>
    <property type="evidence" value="ECO:0007669"/>
    <property type="project" value="UniProtKB-UniRule"/>
</dbReference>
<dbReference type="GO" id="GO:0009089">
    <property type="term" value="P:lysine biosynthetic process via diaminopimelate"/>
    <property type="evidence" value="ECO:0007669"/>
    <property type="project" value="UniProtKB-UniRule"/>
</dbReference>
<dbReference type="CDD" id="cd00950">
    <property type="entry name" value="DHDPS"/>
    <property type="match status" value="1"/>
</dbReference>
<dbReference type="Gene3D" id="3.20.20.70">
    <property type="entry name" value="Aldolase class I"/>
    <property type="match status" value="1"/>
</dbReference>
<dbReference type="HAMAP" id="MF_00418">
    <property type="entry name" value="DapA"/>
    <property type="match status" value="1"/>
</dbReference>
<dbReference type="InterPro" id="IPR013785">
    <property type="entry name" value="Aldolase_TIM"/>
</dbReference>
<dbReference type="InterPro" id="IPR005263">
    <property type="entry name" value="DapA"/>
</dbReference>
<dbReference type="InterPro" id="IPR002220">
    <property type="entry name" value="DapA-like"/>
</dbReference>
<dbReference type="InterPro" id="IPR020625">
    <property type="entry name" value="Schiff_base-form_aldolases_AS"/>
</dbReference>
<dbReference type="InterPro" id="IPR020624">
    <property type="entry name" value="Schiff_base-form_aldolases_CS"/>
</dbReference>
<dbReference type="NCBIfam" id="TIGR00674">
    <property type="entry name" value="dapA"/>
    <property type="match status" value="1"/>
</dbReference>
<dbReference type="PANTHER" id="PTHR12128:SF66">
    <property type="entry name" value="4-HYDROXY-2-OXOGLUTARATE ALDOLASE, MITOCHONDRIAL"/>
    <property type="match status" value="1"/>
</dbReference>
<dbReference type="PANTHER" id="PTHR12128">
    <property type="entry name" value="DIHYDRODIPICOLINATE SYNTHASE"/>
    <property type="match status" value="1"/>
</dbReference>
<dbReference type="Pfam" id="PF00701">
    <property type="entry name" value="DHDPS"/>
    <property type="match status" value="1"/>
</dbReference>
<dbReference type="PIRSF" id="PIRSF001365">
    <property type="entry name" value="DHDPS"/>
    <property type="match status" value="1"/>
</dbReference>
<dbReference type="PRINTS" id="PR00146">
    <property type="entry name" value="DHPICSNTHASE"/>
</dbReference>
<dbReference type="SMART" id="SM01130">
    <property type="entry name" value="DHDPS"/>
    <property type="match status" value="1"/>
</dbReference>
<dbReference type="SUPFAM" id="SSF51569">
    <property type="entry name" value="Aldolase"/>
    <property type="match status" value="1"/>
</dbReference>
<dbReference type="PROSITE" id="PS00665">
    <property type="entry name" value="DHDPS_1"/>
    <property type="match status" value="1"/>
</dbReference>
<dbReference type="PROSITE" id="PS00666">
    <property type="entry name" value="DHDPS_2"/>
    <property type="match status" value="1"/>
</dbReference>
<gene>
    <name evidence="1" type="primary">dapA</name>
    <name type="ordered locus">Daud_0946</name>
</gene>
<evidence type="ECO:0000255" key="1">
    <source>
        <dbReference type="HAMAP-Rule" id="MF_00418"/>
    </source>
</evidence>
<evidence type="ECO:0000305" key="2"/>
<feature type="chain" id="PRO_1000124026" description="4-hydroxy-tetrahydrodipicolinate synthase">
    <location>
        <begin position="1"/>
        <end position="294"/>
    </location>
</feature>
<feature type="active site" description="Proton donor/acceptor" evidence="1">
    <location>
        <position position="136"/>
    </location>
</feature>
<feature type="active site" description="Schiff-base intermediate with substrate" evidence="1">
    <location>
        <position position="164"/>
    </location>
</feature>
<feature type="binding site" evidence="1">
    <location>
        <position position="48"/>
    </location>
    <ligand>
        <name>pyruvate</name>
        <dbReference type="ChEBI" id="CHEBI:15361"/>
    </ligand>
</feature>
<feature type="binding site" evidence="1">
    <location>
        <position position="206"/>
    </location>
    <ligand>
        <name>pyruvate</name>
        <dbReference type="ChEBI" id="CHEBI:15361"/>
    </ligand>
</feature>
<feature type="site" description="Part of a proton relay during catalysis" evidence="1">
    <location>
        <position position="47"/>
    </location>
</feature>
<feature type="site" description="Part of a proton relay during catalysis" evidence="1">
    <location>
        <position position="110"/>
    </location>
</feature>
<comment type="function">
    <text evidence="1">Catalyzes the condensation of (S)-aspartate-beta-semialdehyde [(S)-ASA] and pyruvate to 4-hydroxy-tetrahydrodipicolinate (HTPA).</text>
</comment>
<comment type="catalytic activity">
    <reaction evidence="1">
        <text>L-aspartate 4-semialdehyde + pyruvate = (2S,4S)-4-hydroxy-2,3,4,5-tetrahydrodipicolinate + H2O + H(+)</text>
        <dbReference type="Rhea" id="RHEA:34171"/>
        <dbReference type="ChEBI" id="CHEBI:15361"/>
        <dbReference type="ChEBI" id="CHEBI:15377"/>
        <dbReference type="ChEBI" id="CHEBI:15378"/>
        <dbReference type="ChEBI" id="CHEBI:67139"/>
        <dbReference type="ChEBI" id="CHEBI:537519"/>
        <dbReference type="EC" id="4.3.3.7"/>
    </reaction>
</comment>
<comment type="pathway">
    <text evidence="1">Amino-acid biosynthesis; L-lysine biosynthesis via DAP pathway; (S)-tetrahydrodipicolinate from L-aspartate: step 3/4.</text>
</comment>
<comment type="subunit">
    <text evidence="1">Homotetramer; dimer of dimers.</text>
</comment>
<comment type="subcellular location">
    <subcellularLocation>
        <location evidence="1">Cytoplasm</location>
    </subcellularLocation>
</comment>
<comment type="similarity">
    <text evidence="1">Belongs to the DapA family.</text>
</comment>
<comment type="caution">
    <text evidence="2">Was originally thought to be a dihydrodipicolinate synthase (DHDPS), catalyzing the condensation of (S)-aspartate-beta-semialdehyde [(S)-ASA] and pyruvate to dihydrodipicolinate (DHDP). However, it was shown in E.coli that the product of the enzymatic reaction is not dihydrodipicolinate but in fact (4S)-4-hydroxy-2,3,4,5-tetrahydro-(2S)-dipicolinic acid (HTPA), and that the consecutive dehydration reaction leading to DHDP is not spontaneous but catalyzed by DapB.</text>
</comment>
<proteinExistence type="inferred from homology"/>